<organism>
    <name type="scientific">Escherichia coli O157:H7</name>
    <dbReference type="NCBI Taxonomy" id="83334"/>
    <lineage>
        <taxon>Bacteria</taxon>
        <taxon>Pseudomonadati</taxon>
        <taxon>Pseudomonadota</taxon>
        <taxon>Gammaproteobacteria</taxon>
        <taxon>Enterobacterales</taxon>
        <taxon>Enterobacteriaceae</taxon>
        <taxon>Escherichia</taxon>
    </lineage>
</organism>
<evidence type="ECO:0000255" key="1">
    <source>
        <dbReference type="HAMAP-Rule" id="MF_01639"/>
    </source>
</evidence>
<evidence type="ECO:0000305" key="2"/>
<reference key="1">
    <citation type="journal article" date="2001" name="Nature">
        <title>Genome sequence of enterohaemorrhagic Escherichia coli O157:H7.</title>
        <authorList>
            <person name="Perna N.T."/>
            <person name="Plunkett G. III"/>
            <person name="Burland V."/>
            <person name="Mau B."/>
            <person name="Glasner J.D."/>
            <person name="Rose D.J."/>
            <person name="Mayhew G.F."/>
            <person name="Evans P.S."/>
            <person name="Gregor J."/>
            <person name="Kirkpatrick H.A."/>
            <person name="Posfai G."/>
            <person name="Hackett J."/>
            <person name="Klink S."/>
            <person name="Boutin A."/>
            <person name="Shao Y."/>
            <person name="Miller L."/>
            <person name="Grotbeck E.J."/>
            <person name="Davis N.W."/>
            <person name="Lim A."/>
            <person name="Dimalanta E.T."/>
            <person name="Potamousis K."/>
            <person name="Apodaca J."/>
            <person name="Anantharaman T.S."/>
            <person name="Lin J."/>
            <person name="Yen G."/>
            <person name="Schwartz D.C."/>
            <person name="Welch R.A."/>
            <person name="Blattner F.R."/>
        </authorList>
    </citation>
    <scope>NUCLEOTIDE SEQUENCE [LARGE SCALE GENOMIC DNA]</scope>
    <source>
        <strain>O157:H7 / EDL933 / ATCC 700927 / EHEC</strain>
    </source>
</reference>
<reference key="2">
    <citation type="journal article" date="2001" name="DNA Res.">
        <title>Complete genome sequence of enterohemorrhagic Escherichia coli O157:H7 and genomic comparison with a laboratory strain K-12.</title>
        <authorList>
            <person name="Hayashi T."/>
            <person name="Makino K."/>
            <person name="Ohnishi M."/>
            <person name="Kurokawa K."/>
            <person name="Ishii K."/>
            <person name="Yokoyama K."/>
            <person name="Han C.-G."/>
            <person name="Ohtsubo E."/>
            <person name="Nakayama K."/>
            <person name="Murata T."/>
            <person name="Tanaka M."/>
            <person name="Tobe T."/>
            <person name="Iida T."/>
            <person name="Takami H."/>
            <person name="Honda T."/>
            <person name="Sasakawa C."/>
            <person name="Ogasawara N."/>
            <person name="Yasunaga T."/>
            <person name="Kuhara S."/>
            <person name="Shiba T."/>
            <person name="Hattori M."/>
            <person name="Shinagawa H."/>
        </authorList>
    </citation>
    <scope>NUCLEOTIDE SEQUENCE [LARGE SCALE GENOMIC DNA]</scope>
    <source>
        <strain>O157:H7 / Sakai / RIMD 0509952 / EHEC</strain>
    </source>
</reference>
<name>PDXY_ECO57</name>
<keyword id="KW-0067">ATP-binding</keyword>
<keyword id="KW-0418">Kinase</keyword>
<keyword id="KW-0460">Magnesium</keyword>
<keyword id="KW-0547">Nucleotide-binding</keyword>
<keyword id="KW-1185">Reference proteome</keyword>
<keyword id="KW-0808">Transferase</keyword>
<sequence>MMKNILAIQSHVVYGHAGNSAAEFPMRRLGANVWPLNTVQFSNHTQYGKWTGCVMPPSHLTEIVQGIAAIDKLHTCDAVLSGYLGSAEQGEHILGIVRQVKAANPQAKYFCDPVMGHPEKGCIVAPGVAEFHVRHGLPASDIIAPNLVELEILCEHPVNNVEEAVLAARELIAQGPQIVLVKHLARAGYSRDRFEMLLVTADEAWHISRPLVDFGMRQPVGVGDVTSGLLLVKLLQGATLQEALEHVTAAVYEIMVTTKAMQEYELQVVAAQDRIAKPEHYFSATKL</sequence>
<comment type="function">
    <text evidence="1">Pyridoxal kinase involved in the salvage pathway of pyridoxal 5'-phosphate (PLP). Catalyzes the phosphorylation of pyridoxal to PLP.</text>
</comment>
<comment type="catalytic activity">
    <reaction evidence="1">
        <text>pyridoxal + ATP = pyridoxal 5'-phosphate + ADP + H(+)</text>
        <dbReference type="Rhea" id="RHEA:10224"/>
        <dbReference type="ChEBI" id="CHEBI:15378"/>
        <dbReference type="ChEBI" id="CHEBI:17310"/>
        <dbReference type="ChEBI" id="CHEBI:30616"/>
        <dbReference type="ChEBI" id="CHEBI:456216"/>
        <dbReference type="ChEBI" id="CHEBI:597326"/>
        <dbReference type="EC" id="2.7.1.35"/>
    </reaction>
</comment>
<comment type="cofactor">
    <cofactor evidence="1">
        <name>Mg(2+)</name>
        <dbReference type="ChEBI" id="CHEBI:18420"/>
    </cofactor>
</comment>
<comment type="pathway">
    <text evidence="1">Cofactor metabolism; pyridoxal 5'-phosphate salvage; pyridoxal 5'-phosphate from pyridoxal: step 1/1.</text>
</comment>
<comment type="subunit">
    <text evidence="1">Homodimer.</text>
</comment>
<comment type="similarity">
    <text evidence="1">Belongs to the pyridoxine kinase family. PdxY subfamily.</text>
</comment>
<comment type="sequence caution" evidence="2">
    <conflict type="erroneous initiation">
        <sequence resource="EMBL-CDS" id="BAB35768"/>
    </conflict>
    <text>Truncated N-terminus.</text>
</comment>
<gene>
    <name evidence="1" type="primary">pdxY</name>
    <name type="ordered locus">Z2648</name>
    <name type="ordered locus">ECs2345</name>
</gene>
<protein>
    <recommendedName>
        <fullName evidence="1">Pyridoxal kinase PdxY</fullName>
        <shortName evidence="1">PL kinase</shortName>
        <ecNumber evidence="1">2.7.1.35</ecNumber>
    </recommendedName>
</protein>
<accession>Q8X649</accession>
<accession>Q7ADK6</accession>
<proteinExistence type="inferred from homology"/>
<dbReference type="EC" id="2.7.1.35" evidence="1"/>
<dbReference type="EMBL" id="AE005174">
    <property type="protein sequence ID" value="AAG56625.1"/>
    <property type="molecule type" value="Genomic_DNA"/>
</dbReference>
<dbReference type="EMBL" id="BA000007">
    <property type="protein sequence ID" value="BAB35768.2"/>
    <property type="status" value="ALT_INIT"/>
    <property type="molecule type" value="Genomic_DNA"/>
</dbReference>
<dbReference type="PIR" id="A90922">
    <property type="entry name" value="A90922"/>
</dbReference>
<dbReference type="PIR" id="E85770">
    <property type="entry name" value="E85770"/>
</dbReference>
<dbReference type="RefSeq" id="NP_310372.1">
    <property type="nucleotide sequence ID" value="NC_002695.1"/>
</dbReference>
<dbReference type="SMR" id="Q8X649"/>
<dbReference type="STRING" id="155864.Z2648"/>
<dbReference type="GeneID" id="912303"/>
<dbReference type="KEGG" id="ece:Z2648"/>
<dbReference type="KEGG" id="ecs:ECs_2345"/>
<dbReference type="PATRIC" id="fig|386585.9.peg.2454"/>
<dbReference type="eggNOG" id="COG2240">
    <property type="taxonomic scope" value="Bacteria"/>
</dbReference>
<dbReference type="HOGENOM" id="CLU_046496_3_0_6"/>
<dbReference type="OMA" id="HTQYGQW"/>
<dbReference type="UniPathway" id="UPA01068">
    <property type="reaction ID" value="UER00298"/>
</dbReference>
<dbReference type="Proteomes" id="UP000000558">
    <property type="component" value="Chromosome"/>
</dbReference>
<dbReference type="Proteomes" id="UP000002519">
    <property type="component" value="Chromosome"/>
</dbReference>
<dbReference type="GO" id="GO:0005829">
    <property type="term" value="C:cytosol"/>
    <property type="evidence" value="ECO:0007669"/>
    <property type="project" value="TreeGrafter"/>
</dbReference>
<dbReference type="GO" id="GO:0005524">
    <property type="term" value="F:ATP binding"/>
    <property type="evidence" value="ECO:0007669"/>
    <property type="project" value="UniProtKB-UniRule"/>
</dbReference>
<dbReference type="GO" id="GO:0000287">
    <property type="term" value="F:magnesium ion binding"/>
    <property type="evidence" value="ECO:0007669"/>
    <property type="project" value="UniProtKB-UniRule"/>
</dbReference>
<dbReference type="GO" id="GO:0008478">
    <property type="term" value="F:pyridoxal kinase activity"/>
    <property type="evidence" value="ECO:0007669"/>
    <property type="project" value="UniProtKB-UniRule"/>
</dbReference>
<dbReference type="GO" id="GO:0009443">
    <property type="term" value="P:pyridoxal 5'-phosphate salvage"/>
    <property type="evidence" value="ECO:0007669"/>
    <property type="project" value="UniProtKB-UniRule"/>
</dbReference>
<dbReference type="CDD" id="cd01173">
    <property type="entry name" value="pyridoxal_pyridoxamine_kinase"/>
    <property type="match status" value="1"/>
</dbReference>
<dbReference type="FunFam" id="3.40.1190.20:FF:000008">
    <property type="entry name" value="Pyridoxal kinase PdxY"/>
    <property type="match status" value="1"/>
</dbReference>
<dbReference type="Gene3D" id="3.40.1190.20">
    <property type="match status" value="1"/>
</dbReference>
<dbReference type="HAMAP" id="MF_01639">
    <property type="entry name" value="PdxY"/>
    <property type="match status" value="1"/>
</dbReference>
<dbReference type="InterPro" id="IPR013749">
    <property type="entry name" value="PM/HMP-P_kinase-1"/>
</dbReference>
<dbReference type="InterPro" id="IPR004625">
    <property type="entry name" value="PyrdxlKinase"/>
</dbReference>
<dbReference type="InterPro" id="IPR023685">
    <property type="entry name" value="Pyridoxal_kinase_PdxY"/>
</dbReference>
<dbReference type="InterPro" id="IPR029056">
    <property type="entry name" value="Ribokinase-like"/>
</dbReference>
<dbReference type="NCBIfam" id="NF004398">
    <property type="entry name" value="PRK05756.1"/>
    <property type="match status" value="1"/>
</dbReference>
<dbReference type="NCBIfam" id="TIGR00687">
    <property type="entry name" value="pyridox_kin"/>
    <property type="match status" value="1"/>
</dbReference>
<dbReference type="PANTHER" id="PTHR10534">
    <property type="entry name" value="PYRIDOXAL KINASE"/>
    <property type="match status" value="1"/>
</dbReference>
<dbReference type="PANTHER" id="PTHR10534:SF2">
    <property type="entry name" value="PYRIDOXAL KINASE"/>
    <property type="match status" value="1"/>
</dbReference>
<dbReference type="Pfam" id="PF08543">
    <property type="entry name" value="Phos_pyr_kin"/>
    <property type="match status" value="1"/>
</dbReference>
<dbReference type="SUPFAM" id="SSF53613">
    <property type="entry name" value="Ribokinase-like"/>
    <property type="match status" value="1"/>
</dbReference>
<feature type="chain" id="PRO_0000269808" description="Pyridoxal kinase PdxY">
    <location>
        <begin position="1"/>
        <end position="287"/>
    </location>
</feature>
<feature type="binding site" evidence="1">
    <location>
        <position position="10"/>
    </location>
    <ligand>
        <name>substrate</name>
    </ligand>
</feature>
<feature type="binding site" evidence="1">
    <location>
        <begin position="45"/>
        <end position="46"/>
    </location>
    <ligand>
        <name>substrate</name>
    </ligand>
</feature>
<feature type="binding site" evidence="1">
    <location>
        <position position="112"/>
    </location>
    <ligand>
        <name>ATP</name>
        <dbReference type="ChEBI" id="CHEBI:30616"/>
    </ligand>
</feature>
<feature type="binding site" evidence="1">
    <location>
        <position position="144"/>
    </location>
    <ligand>
        <name>ATP</name>
        <dbReference type="ChEBI" id="CHEBI:30616"/>
    </ligand>
</feature>
<feature type="binding site" evidence="1">
    <location>
        <position position="149"/>
    </location>
    <ligand>
        <name>ATP</name>
        <dbReference type="ChEBI" id="CHEBI:30616"/>
    </ligand>
</feature>
<feature type="binding site" evidence="1">
    <location>
        <position position="182"/>
    </location>
    <ligand>
        <name>ATP</name>
        <dbReference type="ChEBI" id="CHEBI:30616"/>
    </ligand>
</feature>
<feature type="binding site" evidence="1">
    <location>
        <begin position="209"/>
        <end position="212"/>
    </location>
    <ligand>
        <name>ATP</name>
        <dbReference type="ChEBI" id="CHEBI:30616"/>
    </ligand>
</feature>
<feature type="binding site" evidence="1">
    <location>
        <position position="224"/>
    </location>
    <ligand>
        <name>substrate</name>
    </ligand>
</feature>